<feature type="chain" id="PRO_0000309327" description="Rhotekin-2">
    <location>
        <begin position="1"/>
        <end position="604"/>
    </location>
</feature>
<feature type="domain" description="REM-1" evidence="4">
    <location>
        <begin position="1"/>
        <end position="74"/>
    </location>
</feature>
<feature type="domain" description="PH" evidence="3">
    <location>
        <begin position="281"/>
        <end position="387"/>
    </location>
</feature>
<feature type="region of interest" description="Disordered" evidence="5">
    <location>
        <begin position="481"/>
        <end position="590"/>
    </location>
</feature>
<feature type="coiled-coil region" evidence="2">
    <location>
        <begin position="53"/>
        <end position="79"/>
    </location>
</feature>
<feature type="compositionally biased region" description="Polar residues" evidence="5">
    <location>
        <begin position="514"/>
        <end position="527"/>
    </location>
</feature>
<feature type="compositionally biased region" description="Low complexity" evidence="5">
    <location>
        <begin position="529"/>
        <end position="543"/>
    </location>
</feature>
<feature type="splice variant" id="VSP_029140" description="In isoform 2." evidence="6">
    <location>
        <begin position="80"/>
        <end position="82"/>
    </location>
</feature>
<feature type="sequence conflict" description="In Ref. 1; BAC27204." evidence="7" ref="1">
    <original>R</original>
    <variation>L</variation>
    <location>
        <position position="408"/>
    </location>
</feature>
<feature type="sequence conflict" description="In Ref. 2; AAI16342/AAI16343." evidence="7" ref="2">
    <original>R</original>
    <variation>G</variation>
    <location>
        <position position="449"/>
    </location>
</feature>
<feature type="sequence conflict" description="In Ref. 2; AAI16342/AAI16343." evidence="7" ref="2">
    <original>I</original>
    <variation>T</variation>
    <location>
        <position position="484"/>
    </location>
</feature>
<feature type="sequence conflict" description="In Ref. 2; AAI16342/AAI16343." evidence="7" ref="2">
    <original>R</original>
    <variation>S</variation>
    <location>
        <position position="515"/>
    </location>
</feature>
<feature type="sequence conflict" description="In Ref. 2; AAI16342/AAI16343." evidence="7" ref="2">
    <original>SS</original>
    <variation>PL</variation>
    <location>
        <begin position="533"/>
        <end position="534"/>
    </location>
</feature>
<feature type="sequence conflict" description="In Ref. 2; AAI16342/AAI16343." evidence="7" ref="2">
    <original>SP</original>
    <variation>LL</variation>
    <location>
        <begin position="541"/>
        <end position="542"/>
    </location>
</feature>
<feature type="sequence conflict" description="In Ref. 1; BAC27204." evidence="7" ref="1">
    <original>A</original>
    <variation>G</variation>
    <location>
        <position position="560"/>
    </location>
</feature>
<comment type="function">
    <text evidence="1">May play an important role in lymphopoiesis.</text>
</comment>
<comment type="alternative products">
    <event type="alternative splicing"/>
    <isoform>
        <id>Q14B46-1</id>
        <name>1</name>
        <sequence type="displayed"/>
    </isoform>
    <isoform>
        <id>Q14B46-2</id>
        <name>2</name>
        <sequence type="described" ref="VSP_029140"/>
    </isoform>
</comment>
<sequence length="604" mass="66962">MEGQLLRGLAAQQDCSIREKIDLEIRMREGIWKLLSLSTKKDQVLHAVKNLMVCSARIQAYTAELQKSKEEIANQTGARLVLDSSSENKEGESCRGKIALSDIRIPLMWKDSDHFSNKECTQRFAIFCLFRMGAQVFDTDMVIVDQTVTDICFENVTIFNEAGPDFQIKIEVYSCSAEESSLTNTPRKLAKKLKTSISKATGRKISAALQEESPEACLLAGSVAGAKYHLLAHTTLTLENAGDCFKTHNLSVHGDEECSFWLPLYGNVCCRLVAQPACMAADAFAGFLNEQQTGKGLVGWRRLYCALRGGKLRCFYGPEEIEAKVEPALVVPIDKETRIQAVEKDSKKMHCFSVLSTAAGRAVSHIFAADSLADFQEWMGAFRQHFFDLSQWKHCCEELMRIEIMSPRKPPLFLAKEATSVYYDMSIDSPVKLESVTDIIQKKIGETNRQFLIGRDDQSAAPPWAAVFDGNHEMVIEKKVLSPIGEPAPDGKRKKRRAPLPPTDQPPFCIKTQGRANQSKDSATQAGVSGASSSPSDPRLSPPTHHLQKPVAAPRKLLPARKNSSADIGHTDTKTSLDAKPVPVPRQKSIRDILDPRSWLQAQV</sequence>
<name>RTKN2_MOUSE</name>
<organism>
    <name type="scientific">Mus musculus</name>
    <name type="common">Mouse</name>
    <dbReference type="NCBI Taxonomy" id="10090"/>
    <lineage>
        <taxon>Eukaryota</taxon>
        <taxon>Metazoa</taxon>
        <taxon>Chordata</taxon>
        <taxon>Craniata</taxon>
        <taxon>Vertebrata</taxon>
        <taxon>Euteleostomi</taxon>
        <taxon>Mammalia</taxon>
        <taxon>Eutheria</taxon>
        <taxon>Euarchontoglires</taxon>
        <taxon>Glires</taxon>
        <taxon>Rodentia</taxon>
        <taxon>Myomorpha</taxon>
        <taxon>Muroidea</taxon>
        <taxon>Muridae</taxon>
        <taxon>Murinae</taxon>
        <taxon>Mus</taxon>
        <taxon>Mus</taxon>
    </lineage>
</organism>
<reference key="1">
    <citation type="journal article" date="2005" name="Science">
        <title>The transcriptional landscape of the mammalian genome.</title>
        <authorList>
            <person name="Carninci P."/>
            <person name="Kasukawa T."/>
            <person name="Katayama S."/>
            <person name="Gough J."/>
            <person name="Frith M.C."/>
            <person name="Maeda N."/>
            <person name="Oyama R."/>
            <person name="Ravasi T."/>
            <person name="Lenhard B."/>
            <person name="Wells C."/>
            <person name="Kodzius R."/>
            <person name="Shimokawa K."/>
            <person name="Bajic V.B."/>
            <person name="Brenner S.E."/>
            <person name="Batalov S."/>
            <person name="Forrest A.R."/>
            <person name="Zavolan M."/>
            <person name="Davis M.J."/>
            <person name="Wilming L.G."/>
            <person name="Aidinis V."/>
            <person name="Allen J.E."/>
            <person name="Ambesi-Impiombato A."/>
            <person name="Apweiler R."/>
            <person name="Aturaliya R.N."/>
            <person name="Bailey T.L."/>
            <person name="Bansal M."/>
            <person name="Baxter L."/>
            <person name="Beisel K.W."/>
            <person name="Bersano T."/>
            <person name="Bono H."/>
            <person name="Chalk A.M."/>
            <person name="Chiu K.P."/>
            <person name="Choudhary V."/>
            <person name="Christoffels A."/>
            <person name="Clutterbuck D.R."/>
            <person name="Crowe M.L."/>
            <person name="Dalla E."/>
            <person name="Dalrymple B.P."/>
            <person name="de Bono B."/>
            <person name="Della Gatta G."/>
            <person name="di Bernardo D."/>
            <person name="Down T."/>
            <person name="Engstrom P."/>
            <person name="Fagiolini M."/>
            <person name="Faulkner G."/>
            <person name="Fletcher C.F."/>
            <person name="Fukushima T."/>
            <person name="Furuno M."/>
            <person name="Futaki S."/>
            <person name="Gariboldi M."/>
            <person name="Georgii-Hemming P."/>
            <person name="Gingeras T.R."/>
            <person name="Gojobori T."/>
            <person name="Green R.E."/>
            <person name="Gustincich S."/>
            <person name="Harbers M."/>
            <person name="Hayashi Y."/>
            <person name="Hensch T.K."/>
            <person name="Hirokawa N."/>
            <person name="Hill D."/>
            <person name="Huminiecki L."/>
            <person name="Iacono M."/>
            <person name="Ikeo K."/>
            <person name="Iwama A."/>
            <person name="Ishikawa T."/>
            <person name="Jakt M."/>
            <person name="Kanapin A."/>
            <person name="Katoh M."/>
            <person name="Kawasawa Y."/>
            <person name="Kelso J."/>
            <person name="Kitamura H."/>
            <person name="Kitano H."/>
            <person name="Kollias G."/>
            <person name="Krishnan S.P."/>
            <person name="Kruger A."/>
            <person name="Kummerfeld S.K."/>
            <person name="Kurochkin I.V."/>
            <person name="Lareau L.F."/>
            <person name="Lazarevic D."/>
            <person name="Lipovich L."/>
            <person name="Liu J."/>
            <person name="Liuni S."/>
            <person name="McWilliam S."/>
            <person name="Madan Babu M."/>
            <person name="Madera M."/>
            <person name="Marchionni L."/>
            <person name="Matsuda H."/>
            <person name="Matsuzawa S."/>
            <person name="Miki H."/>
            <person name="Mignone F."/>
            <person name="Miyake S."/>
            <person name="Morris K."/>
            <person name="Mottagui-Tabar S."/>
            <person name="Mulder N."/>
            <person name="Nakano N."/>
            <person name="Nakauchi H."/>
            <person name="Ng P."/>
            <person name="Nilsson R."/>
            <person name="Nishiguchi S."/>
            <person name="Nishikawa S."/>
            <person name="Nori F."/>
            <person name="Ohara O."/>
            <person name="Okazaki Y."/>
            <person name="Orlando V."/>
            <person name="Pang K.C."/>
            <person name="Pavan W.J."/>
            <person name="Pavesi G."/>
            <person name="Pesole G."/>
            <person name="Petrovsky N."/>
            <person name="Piazza S."/>
            <person name="Reed J."/>
            <person name="Reid J.F."/>
            <person name="Ring B.Z."/>
            <person name="Ringwald M."/>
            <person name="Rost B."/>
            <person name="Ruan Y."/>
            <person name="Salzberg S.L."/>
            <person name="Sandelin A."/>
            <person name="Schneider C."/>
            <person name="Schoenbach C."/>
            <person name="Sekiguchi K."/>
            <person name="Semple C.A."/>
            <person name="Seno S."/>
            <person name="Sessa L."/>
            <person name="Sheng Y."/>
            <person name="Shibata Y."/>
            <person name="Shimada H."/>
            <person name="Shimada K."/>
            <person name="Silva D."/>
            <person name="Sinclair B."/>
            <person name="Sperling S."/>
            <person name="Stupka E."/>
            <person name="Sugiura K."/>
            <person name="Sultana R."/>
            <person name="Takenaka Y."/>
            <person name="Taki K."/>
            <person name="Tammoja K."/>
            <person name="Tan S.L."/>
            <person name="Tang S."/>
            <person name="Taylor M.S."/>
            <person name="Tegner J."/>
            <person name="Teichmann S.A."/>
            <person name="Ueda H.R."/>
            <person name="van Nimwegen E."/>
            <person name="Verardo R."/>
            <person name="Wei C.L."/>
            <person name="Yagi K."/>
            <person name="Yamanishi H."/>
            <person name="Zabarovsky E."/>
            <person name="Zhu S."/>
            <person name="Zimmer A."/>
            <person name="Hide W."/>
            <person name="Bult C."/>
            <person name="Grimmond S.M."/>
            <person name="Teasdale R.D."/>
            <person name="Liu E.T."/>
            <person name="Brusic V."/>
            <person name="Quackenbush J."/>
            <person name="Wahlestedt C."/>
            <person name="Mattick J.S."/>
            <person name="Hume D.A."/>
            <person name="Kai C."/>
            <person name="Sasaki D."/>
            <person name="Tomaru Y."/>
            <person name="Fukuda S."/>
            <person name="Kanamori-Katayama M."/>
            <person name="Suzuki M."/>
            <person name="Aoki J."/>
            <person name="Arakawa T."/>
            <person name="Iida J."/>
            <person name="Imamura K."/>
            <person name="Itoh M."/>
            <person name="Kato T."/>
            <person name="Kawaji H."/>
            <person name="Kawagashira N."/>
            <person name="Kawashima T."/>
            <person name="Kojima M."/>
            <person name="Kondo S."/>
            <person name="Konno H."/>
            <person name="Nakano K."/>
            <person name="Ninomiya N."/>
            <person name="Nishio T."/>
            <person name="Okada M."/>
            <person name="Plessy C."/>
            <person name="Shibata K."/>
            <person name="Shiraki T."/>
            <person name="Suzuki S."/>
            <person name="Tagami M."/>
            <person name="Waki K."/>
            <person name="Watahiki A."/>
            <person name="Okamura-Oho Y."/>
            <person name="Suzuki H."/>
            <person name="Kawai J."/>
            <person name="Hayashizaki Y."/>
        </authorList>
    </citation>
    <scope>NUCLEOTIDE SEQUENCE [LARGE SCALE MRNA] (ISOFORM 2)</scope>
    <scope>NUCLEOTIDE SEQUENCE [LARGE SCALE MRNA] OF 1-439 (ISOFORM 1)</scope>
    <source>
        <strain>C57BL/6J</strain>
        <tissue>Embryo</tissue>
        <tissue>Kidney</tissue>
        <tissue>Thymus</tissue>
    </source>
</reference>
<reference key="2">
    <citation type="journal article" date="2004" name="Genome Res.">
        <title>The status, quality, and expansion of the NIH full-length cDNA project: the Mammalian Gene Collection (MGC).</title>
        <authorList>
            <consortium name="The MGC Project Team"/>
        </authorList>
    </citation>
    <scope>NUCLEOTIDE SEQUENCE [LARGE SCALE MRNA] (ISOFORM 1)</scope>
</reference>
<reference key="3">
    <citation type="journal article" date="2010" name="Cell">
        <title>A tissue-specific atlas of mouse protein phosphorylation and expression.</title>
        <authorList>
            <person name="Huttlin E.L."/>
            <person name="Jedrychowski M.P."/>
            <person name="Elias J.E."/>
            <person name="Goswami T."/>
            <person name="Rad R."/>
            <person name="Beausoleil S.A."/>
            <person name="Villen J."/>
            <person name="Haas W."/>
            <person name="Sowa M.E."/>
            <person name="Gygi S.P."/>
        </authorList>
    </citation>
    <scope>IDENTIFICATION BY MASS SPECTROMETRY [LARGE SCALE ANALYSIS]</scope>
    <source>
        <tissue>Lung</tissue>
    </source>
</reference>
<evidence type="ECO:0000250" key="1"/>
<evidence type="ECO:0000255" key="2"/>
<evidence type="ECO:0000255" key="3">
    <source>
        <dbReference type="PROSITE-ProRule" id="PRU00145"/>
    </source>
</evidence>
<evidence type="ECO:0000255" key="4">
    <source>
        <dbReference type="PROSITE-ProRule" id="PRU01207"/>
    </source>
</evidence>
<evidence type="ECO:0000256" key="5">
    <source>
        <dbReference type="SAM" id="MobiDB-lite"/>
    </source>
</evidence>
<evidence type="ECO:0000303" key="6">
    <source>
    </source>
</evidence>
<evidence type="ECO:0000305" key="7"/>
<gene>
    <name type="primary">Rtkn2</name>
    <name type="synonym">Plekhk1</name>
</gene>
<dbReference type="EMBL" id="AK030986">
    <property type="protein sequence ID" value="BAC27204.1"/>
    <property type="molecule type" value="mRNA"/>
</dbReference>
<dbReference type="EMBL" id="AK045134">
    <property type="protein sequence ID" value="BAC32237.1"/>
    <property type="molecule type" value="mRNA"/>
</dbReference>
<dbReference type="EMBL" id="AK052662">
    <property type="protein sequence ID" value="BAC35087.1"/>
    <property type="molecule type" value="mRNA"/>
</dbReference>
<dbReference type="EMBL" id="BC116341">
    <property type="protein sequence ID" value="AAI16342.1"/>
    <property type="molecule type" value="mRNA"/>
</dbReference>
<dbReference type="EMBL" id="BC116342">
    <property type="protein sequence ID" value="AAI16343.1"/>
    <property type="molecule type" value="mRNA"/>
</dbReference>
<dbReference type="CCDS" id="CCDS88017.1">
    <molecule id="Q14B46-2"/>
</dbReference>
<dbReference type="CCDS" id="CCDS88018.1">
    <molecule id="Q14B46-1"/>
</dbReference>
<dbReference type="RefSeq" id="NP_001346247.1">
    <molecule id="Q14B46-1"/>
    <property type="nucleotide sequence ID" value="NM_001359318.1"/>
</dbReference>
<dbReference type="RefSeq" id="NP_001346248.1">
    <molecule id="Q14B46-2"/>
    <property type="nucleotide sequence ID" value="NM_001359319.1"/>
</dbReference>
<dbReference type="RefSeq" id="XP_006513353.1">
    <property type="nucleotide sequence ID" value="XM_006513290.2"/>
</dbReference>
<dbReference type="RefSeq" id="XP_006513354.1">
    <property type="nucleotide sequence ID" value="XM_006513291.1"/>
</dbReference>
<dbReference type="SMR" id="Q14B46"/>
<dbReference type="BioGRID" id="228447">
    <property type="interactions" value="3"/>
</dbReference>
<dbReference type="FunCoup" id="Q14B46">
    <property type="interactions" value="1827"/>
</dbReference>
<dbReference type="STRING" id="10090.ENSMUSP00000112946"/>
<dbReference type="iPTMnet" id="Q14B46"/>
<dbReference type="PhosphoSitePlus" id="Q14B46"/>
<dbReference type="jPOST" id="Q14B46"/>
<dbReference type="PaxDb" id="10090-ENSMUSP00000112946"/>
<dbReference type="ProteomicsDB" id="257051">
    <molecule id="Q14B46-1"/>
</dbReference>
<dbReference type="ProteomicsDB" id="257052">
    <molecule id="Q14B46-2"/>
</dbReference>
<dbReference type="Antibodypedia" id="28261">
    <property type="antibodies" value="138 antibodies from 24 providers"/>
</dbReference>
<dbReference type="Ensembl" id="ENSMUST00000068994.14">
    <molecule id="Q14B46-1"/>
    <property type="protein sequence ID" value="ENSMUSP00000070717.8"/>
    <property type="gene ID" value="ENSMUSG00000037846.19"/>
</dbReference>
<dbReference type="Ensembl" id="ENSMUST00000117086.2">
    <molecule id="Q14B46-2"/>
    <property type="protein sequence ID" value="ENSMUSP00000112419.2"/>
    <property type="gene ID" value="ENSMUSG00000037846.19"/>
</dbReference>
<dbReference type="Ensembl" id="ENSMUST00000118160.8">
    <molecule id="Q14B46-1"/>
    <property type="protein sequence ID" value="ENSMUSP00000112946.2"/>
    <property type="gene ID" value="ENSMUSG00000037846.19"/>
</dbReference>
<dbReference type="Ensembl" id="ENSMUST00000147556.8">
    <molecule id="Q14B46-2"/>
    <property type="protein sequence ID" value="ENSMUSP00000116166.2"/>
    <property type="gene ID" value="ENSMUSG00000037846.19"/>
</dbReference>
<dbReference type="GeneID" id="170799"/>
<dbReference type="UCSC" id="uc011xfq.1">
    <molecule id="Q14B46-1"/>
    <property type="organism name" value="mouse"/>
</dbReference>
<dbReference type="AGR" id="MGI:2158417"/>
<dbReference type="MGI" id="MGI:2158417">
    <property type="gene designation" value="Rtkn2"/>
</dbReference>
<dbReference type="VEuPathDB" id="HostDB:ENSMUSG00000037846"/>
<dbReference type="eggNOG" id="ENOG502QRWR">
    <property type="taxonomic scope" value="Eukaryota"/>
</dbReference>
<dbReference type="GeneTree" id="ENSGT00940000157470"/>
<dbReference type="HOGENOM" id="CLU_025066_1_0_1"/>
<dbReference type="InParanoid" id="Q14B46"/>
<dbReference type="OMA" id="GNHKMVI"/>
<dbReference type="OrthoDB" id="5817051at2759"/>
<dbReference type="PhylomeDB" id="Q14B46"/>
<dbReference type="TreeFam" id="TF331476"/>
<dbReference type="BioGRID-ORCS" id="170799">
    <property type="hits" value="2 hits in 78 CRISPR screens"/>
</dbReference>
<dbReference type="PRO" id="PR:Q14B46"/>
<dbReference type="Proteomes" id="UP000000589">
    <property type="component" value="Chromosome 10"/>
</dbReference>
<dbReference type="RNAct" id="Q14B46">
    <property type="molecule type" value="protein"/>
</dbReference>
<dbReference type="Bgee" id="ENSMUSG00000037846">
    <property type="expression patterns" value="Expressed in right lung lobe and 117 other cell types or tissues"/>
</dbReference>
<dbReference type="ExpressionAtlas" id="Q14B46">
    <property type="expression patterns" value="baseline and differential"/>
</dbReference>
<dbReference type="GO" id="GO:0005737">
    <property type="term" value="C:cytoplasm"/>
    <property type="evidence" value="ECO:0000250"/>
    <property type="project" value="UniProtKB"/>
</dbReference>
<dbReference type="GO" id="GO:0005634">
    <property type="term" value="C:nucleus"/>
    <property type="evidence" value="ECO:0000250"/>
    <property type="project" value="UniProtKB"/>
</dbReference>
<dbReference type="GO" id="GO:0005886">
    <property type="term" value="C:plasma membrane"/>
    <property type="evidence" value="ECO:0000314"/>
    <property type="project" value="MGI"/>
</dbReference>
<dbReference type="GO" id="GO:0030097">
    <property type="term" value="P:hemopoiesis"/>
    <property type="evidence" value="ECO:0000314"/>
    <property type="project" value="MGI"/>
</dbReference>
<dbReference type="GO" id="GO:2001243">
    <property type="term" value="P:negative regulation of intrinsic apoptotic signaling pathway"/>
    <property type="evidence" value="ECO:0000250"/>
    <property type="project" value="UniProtKB"/>
</dbReference>
<dbReference type="GO" id="GO:0008284">
    <property type="term" value="P:positive regulation of cell population proliferation"/>
    <property type="evidence" value="ECO:0000314"/>
    <property type="project" value="MGI"/>
</dbReference>
<dbReference type="GO" id="GO:0051092">
    <property type="term" value="P:positive regulation of NF-kappaB transcription factor activity"/>
    <property type="evidence" value="ECO:0000250"/>
    <property type="project" value="UniProtKB"/>
</dbReference>
<dbReference type="GO" id="GO:1901224">
    <property type="term" value="P:positive regulation of non-canonical NF-kappaB signal transduction"/>
    <property type="evidence" value="ECO:0000250"/>
    <property type="project" value="UniProtKB"/>
</dbReference>
<dbReference type="GO" id="GO:0007165">
    <property type="term" value="P:signal transduction"/>
    <property type="evidence" value="ECO:0007669"/>
    <property type="project" value="InterPro"/>
</dbReference>
<dbReference type="CDD" id="cd13249">
    <property type="entry name" value="PH_rhotekin2"/>
    <property type="match status" value="1"/>
</dbReference>
<dbReference type="FunFam" id="2.30.29.30:FF:000659">
    <property type="entry name" value="Rhotekin 2"/>
    <property type="match status" value="1"/>
</dbReference>
<dbReference type="Gene3D" id="2.30.29.30">
    <property type="entry name" value="Pleckstrin-homology domain (PH domain)/Phosphotyrosine-binding domain (PTB)"/>
    <property type="match status" value="1"/>
</dbReference>
<dbReference type="InterPro" id="IPR012966">
    <property type="entry name" value="AHD"/>
</dbReference>
<dbReference type="InterPro" id="IPR051364">
    <property type="entry name" value="Cytokinesis/Rho-signaling"/>
</dbReference>
<dbReference type="InterPro" id="IPR011072">
    <property type="entry name" value="HR1_rho-bd"/>
</dbReference>
<dbReference type="InterPro" id="IPR011993">
    <property type="entry name" value="PH-like_dom_sf"/>
</dbReference>
<dbReference type="InterPro" id="IPR001849">
    <property type="entry name" value="PH_domain"/>
</dbReference>
<dbReference type="PANTHER" id="PTHR21538">
    <property type="entry name" value="ANILLIN/RHOTEKIN RTKN"/>
    <property type="match status" value="1"/>
</dbReference>
<dbReference type="PANTHER" id="PTHR21538:SF21">
    <property type="entry name" value="RHOTEKIN-2"/>
    <property type="match status" value="1"/>
</dbReference>
<dbReference type="Pfam" id="PF08174">
    <property type="entry name" value="Anillin"/>
    <property type="match status" value="1"/>
</dbReference>
<dbReference type="Pfam" id="PF00169">
    <property type="entry name" value="PH"/>
    <property type="match status" value="1"/>
</dbReference>
<dbReference type="SMART" id="SM00742">
    <property type="entry name" value="Hr1"/>
    <property type="match status" value="1"/>
</dbReference>
<dbReference type="SMART" id="SM00233">
    <property type="entry name" value="PH"/>
    <property type="match status" value="1"/>
</dbReference>
<dbReference type="SUPFAM" id="SSF50729">
    <property type="entry name" value="PH domain-like"/>
    <property type="match status" value="1"/>
</dbReference>
<dbReference type="PROSITE" id="PS50003">
    <property type="entry name" value="PH_DOMAIN"/>
    <property type="match status" value="1"/>
</dbReference>
<dbReference type="PROSITE" id="PS51860">
    <property type="entry name" value="REM_1"/>
    <property type="match status" value="1"/>
</dbReference>
<proteinExistence type="evidence at protein level"/>
<protein>
    <recommendedName>
        <fullName>Rhotekin-2</fullName>
    </recommendedName>
    <alternativeName>
        <fullName>Pleckstrin homology domain-containing family K member 1</fullName>
        <shortName>PH domain-containing family K member 1</shortName>
    </alternativeName>
</protein>
<keyword id="KW-0025">Alternative splicing</keyword>
<keyword id="KW-0175">Coiled coil</keyword>
<keyword id="KW-1185">Reference proteome</keyword>
<accession>Q14B46</accession>
<accession>Q8BFP3</accession>
<accession>Q8BFP8</accession>
<accession>Q8BFQ0</accession>